<dbReference type="EMBL" id="AE015928">
    <property type="protein sequence ID" value="AAO77817.1"/>
    <property type="molecule type" value="Genomic_DNA"/>
</dbReference>
<dbReference type="RefSeq" id="NP_811623.1">
    <property type="nucleotide sequence ID" value="NC_004663.1"/>
</dbReference>
<dbReference type="RefSeq" id="WP_008765430.1">
    <property type="nucleotide sequence ID" value="NZ_UYXG01000001.1"/>
</dbReference>
<dbReference type="SMR" id="Q8A492"/>
<dbReference type="FunCoup" id="Q8A492">
    <property type="interactions" value="594"/>
</dbReference>
<dbReference type="STRING" id="226186.BT_2711"/>
<dbReference type="PaxDb" id="226186-BT_2711"/>
<dbReference type="EnsemblBacteria" id="AAO77817">
    <property type="protein sequence ID" value="AAO77817"/>
    <property type="gene ID" value="BT_2711"/>
</dbReference>
<dbReference type="GeneID" id="69587571"/>
<dbReference type="KEGG" id="bth:BT_2711"/>
<dbReference type="PATRIC" id="fig|226186.12.peg.2754"/>
<dbReference type="eggNOG" id="COG0256">
    <property type="taxonomic scope" value="Bacteria"/>
</dbReference>
<dbReference type="HOGENOM" id="CLU_098841_0_1_10"/>
<dbReference type="InParanoid" id="Q8A492"/>
<dbReference type="OrthoDB" id="9810939at2"/>
<dbReference type="Proteomes" id="UP000001414">
    <property type="component" value="Chromosome"/>
</dbReference>
<dbReference type="GO" id="GO:0022625">
    <property type="term" value="C:cytosolic large ribosomal subunit"/>
    <property type="evidence" value="ECO:0000318"/>
    <property type="project" value="GO_Central"/>
</dbReference>
<dbReference type="GO" id="GO:0008097">
    <property type="term" value="F:5S rRNA binding"/>
    <property type="evidence" value="ECO:0000318"/>
    <property type="project" value="GO_Central"/>
</dbReference>
<dbReference type="GO" id="GO:0003735">
    <property type="term" value="F:structural constituent of ribosome"/>
    <property type="evidence" value="ECO:0007669"/>
    <property type="project" value="InterPro"/>
</dbReference>
<dbReference type="GO" id="GO:0006412">
    <property type="term" value="P:translation"/>
    <property type="evidence" value="ECO:0007669"/>
    <property type="project" value="UniProtKB-UniRule"/>
</dbReference>
<dbReference type="CDD" id="cd00432">
    <property type="entry name" value="Ribosomal_L18_L5e"/>
    <property type="match status" value="1"/>
</dbReference>
<dbReference type="FunFam" id="3.30.420.100:FF:000003">
    <property type="entry name" value="50S ribosomal protein L18"/>
    <property type="match status" value="1"/>
</dbReference>
<dbReference type="Gene3D" id="3.30.420.100">
    <property type="match status" value="1"/>
</dbReference>
<dbReference type="HAMAP" id="MF_01337_B">
    <property type="entry name" value="Ribosomal_uL18_B"/>
    <property type="match status" value="1"/>
</dbReference>
<dbReference type="InterPro" id="IPR004389">
    <property type="entry name" value="Ribosomal_uL18_bac-type"/>
</dbReference>
<dbReference type="InterPro" id="IPR005484">
    <property type="entry name" value="Ribosomal_uL18_bac/euk"/>
</dbReference>
<dbReference type="NCBIfam" id="TIGR00060">
    <property type="entry name" value="L18_bact"/>
    <property type="match status" value="1"/>
</dbReference>
<dbReference type="PANTHER" id="PTHR12899">
    <property type="entry name" value="39S RIBOSOMAL PROTEIN L18, MITOCHONDRIAL"/>
    <property type="match status" value="1"/>
</dbReference>
<dbReference type="PANTHER" id="PTHR12899:SF3">
    <property type="entry name" value="LARGE RIBOSOMAL SUBUNIT PROTEIN UL18M"/>
    <property type="match status" value="1"/>
</dbReference>
<dbReference type="Pfam" id="PF00861">
    <property type="entry name" value="Ribosomal_L18p"/>
    <property type="match status" value="1"/>
</dbReference>
<dbReference type="SUPFAM" id="SSF53137">
    <property type="entry name" value="Translational machinery components"/>
    <property type="match status" value="1"/>
</dbReference>
<accession>Q8A492</accession>
<proteinExistence type="inferred from homology"/>
<reference key="1">
    <citation type="journal article" date="2003" name="Science">
        <title>A genomic view of the human-Bacteroides thetaiotaomicron symbiosis.</title>
        <authorList>
            <person name="Xu J."/>
            <person name="Bjursell M.K."/>
            <person name="Himrod J."/>
            <person name="Deng S."/>
            <person name="Carmichael L.K."/>
            <person name="Chiang H.C."/>
            <person name="Hooper L.V."/>
            <person name="Gordon J.I."/>
        </authorList>
    </citation>
    <scope>NUCLEOTIDE SEQUENCE [LARGE SCALE GENOMIC DNA]</scope>
    <source>
        <strain>ATCC 29148 / DSM 2079 / JCM 5827 / CCUG 10774 / NCTC 10582 / VPI-5482 / E50</strain>
    </source>
</reference>
<feature type="chain" id="PRO_0000131217" description="Large ribosomal subunit protein uL18">
    <location>
        <begin position="1"/>
        <end position="114"/>
    </location>
</feature>
<sequence>MTTKIERRVKIKYRVRNKISGTAERPRMSVFRSNKQIYVQIIDDLSGKTLAAASSLGMAEKVAKKEQAAKVGEMIAKKAQEAGITTVVFDRNGYLYHGRVKEVADAARNGGLKF</sequence>
<comment type="function">
    <text evidence="1">This is one of the proteins that bind and probably mediate the attachment of the 5S RNA into the large ribosomal subunit, where it forms part of the central protuberance.</text>
</comment>
<comment type="subunit">
    <text evidence="1">Part of the 50S ribosomal subunit; part of the 5S rRNA/L5/L18/L25 subcomplex. Contacts the 5S and 23S rRNAs.</text>
</comment>
<comment type="similarity">
    <text evidence="1">Belongs to the universal ribosomal protein uL18 family.</text>
</comment>
<keyword id="KW-1185">Reference proteome</keyword>
<keyword id="KW-0687">Ribonucleoprotein</keyword>
<keyword id="KW-0689">Ribosomal protein</keyword>
<keyword id="KW-0694">RNA-binding</keyword>
<keyword id="KW-0699">rRNA-binding</keyword>
<name>RL18_BACTN</name>
<protein>
    <recommendedName>
        <fullName evidence="1">Large ribosomal subunit protein uL18</fullName>
    </recommendedName>
    <alternativeName>
        <fullName evidence="2">50S ribosomal protein L18</fullName>
    </alternativeName>
</protein>
<organism>
    <name type="scientific">Bacteroides thetaiotaomicron (strain ATCC 29148 / DSM 2079 / JCM 5827 / CCUG 10774 / NCTC 10582 / VPI-5482 / E50)</name>
    <dbReference type="NCBI Taxonomy" id="226186"/>
    <lineage>
        <taxon>Bacteria</taxon>
        <taxon>Pseudomonadati</taxon>
        <taxon>Bacteroidota</taxon>
        <taxon>Bacteroidia</taxon>
        <taxon>Bacteroidales</taxon>
        <taxon>Bacteroidaceae</taxon>
        <taxon>Bacteroides</taxon>
    </lineage>
</organism>
<evidence type="ECO:0000255" key="1">
    <source>
        <dbReference type="HAMAP-Rule" id="MF_01337"/>
    </source>
</evidence>
<evidence type="ECO:0000305" key="2"/>
<gene>
    <name evidence="1" type="primary">rplR</name>
    <name type="ordered locus">BT_2711</name>
</gene>